<sequence>MNKQIQTEADELGFFGEYGGQYVPETLMPAIIELKKAYKEAKADPEFQRELEYYLSEYVGRATPLTYAASYTESLGGAKIYLKREDLNHTGAHKINNALGQALLAKRMGKKKLVAETGAGQHGVASATVAALFDMELVVFMGSEDIKRQQLNVFRMELLGAKVVAVEDGQGTLSDAVNKALQYWVSHVDDTHYLLGSALGPDPFPTIVRDFQSVIGKEIKSQILKKEGRLPDAIVACIGGGSNAIGTFYPFIKDDVALYGVEAAGQGDDTDKHALAIGKGSPGVLHGTKMYLIQDEDGQVQLAHSISAGLDYPGIGPEHSYYHDIGRVTFENASDTQAMNALINFTKHEGIIPAIESAHALSYVERLAPTMSKEDIIVVTISGRGDKDMETIRQYMVERGLAND</sequence>
<organism>
    <name type="scientific">Staphylococcus aureus (strain USA300 / TCH1516)</name>
    <dbReference type="NCBI Taxonomy" id="451516"/>
    <lineage>
        <taxon>Bacteria</taxon>
        <taxon>Bacillati</taxon>
        <taxon>Bacillota</taxon>
        <taxon>Bacilli</taxon>
        <taxon>Bacillales</taxon>
        <taxon>Staphylococcaceae</taxon>
        <taxon>Staphylococcus</taxon>
    </lineage>
</organism>
<comment type="function">
    <text evidence="1">The beta subunit is responsible for the synthesis of L-tryptophan from indole and L-serine.</text>
</comment>
<comment type="catalytic activity">
    <reaction evidence="1">
        <text>(1S,2R)-1-C-(indol-3-yl)glycerol 3-phosphate + L-serine = D-glyceraldehyde 3-phosphate + L-tryptophan + H2O</text>
        <dbReference type="Rhea" id="RHEA:10532"/>
        <dbReference type="ChEBI" id="CHEBI:15377"/>
        <dbReference type="ChEBI" id="CHEBI:33384"/>
        <dbReference type="ChEBI" id="CHEBI:57912"/>
        <dbReference type="ChEBI" id="CHEBI:58866"/>
        <dbReference type="ChEBI" id="CHEBI:59776"/>
        <dbReference type="EC" id="4.2.1.20"/>
    </reaction>
</comment>
<comment type="cofactor">
    <cofactor evidence="1">
        <name>pyridoxal 5'-phosphate</name>
        <dbReference type="ChEBI" id="CHEBI:597326"/>
    </cofactor>
</comment>
<comment type="pathway">
    <text evidence="1">Amino-acid biosynthesis; L-tryptophan biosynthesis; L-tryptophan from chorismate: step 5/5.</text>
</comment>
<comment type="subunit">
    <text evidence="1">Tetramer of two alpha and two beta chains.</text>
</comment>
<comment type="similarity">
    <text evidence="1">Belongs to the TrpB family.</text>
</comment>
<reference key="1">
    <citation type="journal article" date="2007" name="BMC Microbiol.">
        <title>Subtle genetic changes enhance virulence of methicillin resistant and sensitive Staphylococcus aureus.</title>
        <authorList>
            <person name="Highlander S.K."/>
            <person name="Hulten K.G."/>
            <person name="Qin X."/>
            <person name="Jiang H."/>
            <person name="Yerrapragada S."/>
            <person name="Mason E.O. Jr."/>
            <person name="Shang Y."/>
            <person name="Williams T.M."/>
            <person name="Fortunov R.M."/>
            <person name="Liu Y."/>
            <person name="Igboeli O."/>
            <person name="Petrosino J."/>
            <person name="Tirumalai M."/>
            <person name="Uzman A."/>
            <person name="Fox G.E."/>
            <person name="Cardenas A.M."/>
            <person name="Muzny D.M."/>
            <person name="Hemphill L."/>
            <person name="Ding Y."/>
            <person name="Dugan S."/>
            <person name="Blyth P.R."/>
            <person name="Buhay C.J."/>
            <person name="Dinh H.H."/>
            <person name="Hawes A.C."/>
            <person name="Holder M."/>
            <person name="Kovar C.L."/>
            <person name="Lee S.L."/>
            <person name="Liu W."/>
            <person name="Nazareth L.V."/>
            <person name="Wang Q."/>
            <person name="Zhou J."/>
            <person name="Kaplan S.L."/>
            <person name="Weinstock G.M."/>
        </authorList>
    </citation>
    <scope>NUCLEOTIDE SEQUENCE [LARGE SCALE GENOMIC DNA]</scope>
    <source>
        <strain>USA300 / TCH1516</strain>
    </source>
</reference>
<feature type="chain" id="PRO_1000076411" description="Tryptophan synthase beta chain">
    <location>
        <begin position="1"/>
        <end position="404"/>
    </location>
</feature>
<feature type="modified residue" description="N6-(pyridoxal phosphate)lysine" evidence="1">
    <location>
        <position position="94"/>
    </location>
</feature>
<name>TRPB_STAAT</name>
<keyword id="KW-0028">Amino-acid biosynthesis</keyword>
<keyword id="KW-0057">Aromatic amino acid biosynthesis</keyword>
<keyword id="KW-0456">Lyase</keyword>
<keyword id="KW-0663">Pyridoxal phosphate</keyword>
<keyword id="KW-0822">Tryptophan biosynthesis</keyword>
<proteinExistence type="inferred from homology"/>
<gene>
    <name evidence="1" type="primary">trpB</name>
    <name type="ordered locus">USA300HOU_1307</name>
</gene>
<evidence type="ECO:0000255" key="1">
    <source>
        <dbReference type="HAMAP-Rule" id="MF_00133"/>
    </source>
</evidence>
<accession>A8Z244</accession>
<protein>
    <recommendedName>
        <fullName evidence="1">Tryptophan synthase beta chain</fullName>
        <ecNumber evidence="1">4.2.1.20</ecNumber>
    </recommendedName>
</protein>
<dbReference type="EC" id="4.2.1.20" evidence="1"/>
<dbReference type="EMBL" id="CP000730">
    <property type="protein sequence ID" value="ABX29319.1"/>
    <property type="molecule type" value="Genomic_DNA"/>
</dbReference>
<dbReference type="RefSeq" id="WP_001041337.1">
    <property type="nucleotide sequence ID" value="NC_010079.1"/>
</dbReference>
<dbReference type="SMR" id="A8Z244"/>
<dbReference type="KEGG" id="sax:USA300HOU_1307"/>
<dbReference type="HOGENOM" id="CLU_016734_3_1_9"/>
<dbReference type="UniPathway" id="UPA00035">
    <property type="reaction ID" value="UER00044"/>
</dbReference>
<dbReference type="GO" id="GO:0005737">
    <property type="term" value="C:cytoplasm"/>
    <property type="evidence" value="ECO:0007669"/>
    <property type="project" value="TreeGrafter"/>
</dbReference>
<dbReference type="GO" id="GO:0004834">
    <property type="term" value="F:tryptophan synthase activity"/>
    <property type="evidence" value="ECO:0007669"/>
    <property type="project" value="UniProtKB-UniRule"/>
</dbReference>
<dbReference type="CDD" id="cd06446">
    <property type="entry name" value="Trp-synth_B"/>
    <property type="match status" value="1"/>
</dbReference>
<dbReference type="FunFam" id="3.40.50.1100:FF:000001">
    <property type="entry name" value="Tryptophan synthase beta chain"/>
    <property type="match status" value="1"/>
</dbReference>
<dbReference type="FunFam" id="3.40.50.1100:FF:000004">
    <property type="entry name" value="Tryptophan synthase beta chain"/>
    <property type="match status" value="1"/>
</dbReference>
<dbReference type="Gene3D" id="3.40.50.1100">
    <property type="match status" value="2"/>
</dbReference>
<dbReference type="HAMAP" id="MF_00133">
    <property type="entry name" value="Trp_synth_beta"/>
    <property type="match status" value="1"/>
</dbReference>
<dbReference type="InterPro" id="IPR006653">
    <property type="entry name" value="Trp_synth_b_CS"/>
</dbReference>
<dbReference type="InterPro" id="IPR006654">
    <property type="entry name" value="Trp_synth_beta"/>
</dbReference>
<dbReference type="InterPro" id="IPR023026">
    <property type="entry name" value="Trp_synth_beta/beta-like"/>
</dbReference>
<dbReference type="InterPro" id="IPR001926">
    <property type="entry name" value="TrpB-like_PALP"/>
</dbReference>
<dbReference type="InterPro" id="IPR036052">
    <property type="entry name" value="TrpB-like_PALP_sf"/>
</dbReference>
<dbReference type="NCBIfam" id="TIGR00263">
    <property type="entry name" value="trpB"/>
    <property type="match status" value="1"/>
</dbReference>
<dbReference type="PANTHER" id="PTHR48077:SF3">
    <property type="entry name" value="TRYPTOPHAN SYNTHASE"/>
    <property type="match status" value="1"/>
</dbReference>
<dbReference type="PANTHER" id="PTHR48077">
    <property type="entry name" value="TRYPTOPHAN SYNTHASE-RELATED"/>
    <property type="match status" value="1"/>
</dbReference>
<dbReference type="Pfam" id="PF00291">
    <property type="entry name" value="PALP"/>
    <property type="match status" value="1"/>
</dbReference>
<dbReference type="PIRSF" id="PIRSF001413">
    <property type="entry name" value="Trp_syn_beta"/>
    <property type="match status" value="1"/>
</dbReference>
<dbReference type="SUPFAM" id="SSF53686">
    <property type="entry name" value="Tryptophan synthase beta subunit-like PLP-dependent enzymes"/>
    <property type="match status" value="1"/>
</dbReference>
<dbReference type="PROSITE" id="PS00168">
    <property type="entry name" value="TRP_SYNTHASE_BETA"/>
    <property type="match status" value="1"/>
</dbReference>